<evidence type="ECO:0000255" key="1"/>
<evidence type="ECO:0000255" key="2">
    <source>
        <dbReference type="PROSITE-ProRule" id="PRU00114"/>
    </source>
</evidence>
<evidence type="ECO:0000255" key="3">
    <source>
        <dbReference type="PROSITE-ProRule" id="PRU00498"/>
    </source>
</evidence>
<evidence type="ECO:0000303" key="4">
    <source>
    </source>
</evidence>
<evidence type="ECO:0000303" key="5">
    <source>
    </source>
</evidence>
<evidence type="ECO:0000303" key="6">
    <source>
    </source>
</evidence>
<evidence type="ECO:0000303" key="7">
    <source>
    </source>
</evidence>
<evidence type="ECO:0000303" key="8">
    <source>
    </source>
</evidence>
<evidence type="ECO:0000303" key="9">
    <source>
    </source>
</evidence>
<evidence type="ECO:0000303" key="10">
    <source ref="3"/>
</evidence>
<evidence type="ECO:0000305" key="11"/>
<reference key="1">
    <citation type="journal article" date="1996" name="Science">
        <title>The complete 685-kilobase DNA sequence of the human beta T cell receptor locus.</title>
        <authorList>
            <person name="Rowen L."/>
            <person name="Koop B.F."/>
            <person name="Hood L."/>
        </authorList>
    </citation>
    <scope>NUCLEOTIDE SEQUENCE [GENOMIC DNA] (IMGT ALLELE TRBV29-1*01)</scope>
</reference>
<reference key="2">
    <citation type="journal article" date="2003" name="Nature">
        <title>The DNA sequence of human chromosome 7.</title>
        <authorList>
            <person name="Hillier L.W."/>
            <person name="Fulton R.S."/>
            <person name="Fulton L.A."/>
            <person name="Graves T.A."/>
            <person name="Pepin K.H."/>
            <person name="Wagner-McPherson C."/>
            <person name="Layman D."/>
            <person name="Maas J."/>
            <person name="Jaeger S."/>
            <person name="Walker R."/>
            <person name="Wylie K."/>
            <person name="Sekhon M."/>
            <person name="Becker M.C."/>
            <person name="O'Laughlin M.D."/>
            <person name="Schaller M.E."/>
            <person name="Fewell G.A."/>
            <person name="Delehaunty K.D."/>
            <person name="Miner T.L."/>
            <person name="Nash W.E."/>
            <person name="Cordes M."/>
            <person name="Du H."/>
            <person name="Sun H."/>
            <person name="Edwards J."/>
            <person name="Bradshaw-Cordum H."/>
            <person name="Ali J."/>
            <person name="Andrews S."/>
            <person name="Isak A."/>
            <person name="Vanbrunt A."/>
            <person name="Nguyen C."/>
            <person name="Du F."/>
            <person name="Lamar B."/>
            <person name="Courtney L."/>
            <person name="Kalicki J."/>
            <person name="Ozersky P."/>
            <person name="Bielicki L."/>
            <person name="Scott K."/>
            <person name="Holmes A."/>
            <person name="Harkins R."/>
            <person name="Harris A."/>
            <person name="Strong C.M."/>
            <person name="Hou S."/>
            <person name="Tomlinson C."/>
            <person name="Dauphin-Kohlberg S."/>
            <person name="Kozlowicz-Reilly A."/>
            <person name="Leonard S."/>
            <person name="Rohlfing T."/>
            <person name="Rock S.M."/>
            <person name="Tin-Wollam A.-M."/>
            <person name="Abbott A."/>
            <person name="Minx P."/>
            <person name="Maupin R."/>
            <person name="Strowmatt C."/>
            <person name="Latreille P."/>
            <person name="Miller N."/>
            <person name="Johnson D."/>
            <person name="Murray J."/>
            <person name="Woessner J.P."/>
            <person name="Wendl M.C."/>
            <person name="Yang S.-P."/>
            <person name="Schultz B.R."/>
            <person name="Wallis J.W."/>
            <person name="Spieth J."/>
            <person name="Bieri T.A."/>
            <person name="Nelson J.O."/>
            <person name="Berkowicz N."/>
            <person name="Wohldmann P.E."/>
            <person name="Cook L.L."/>
            <person name="Hickenbotham M.T."/>
            <person name="Eldred J."/>
            <person name="Williams D."/>
            <person name="Bedell J.A."/>
            <person name="Mardis E.R."/>
            <person name="Clifton S.W."/>
            <person name="Chissoe S.L."/>
            <person name="Marra M.A."/>
            <person name="Raymond C."/>
            <person name="Haugen E."/>
            <person name="Gillett W."/>
            <person name="Zhou Y."/>
            <person name="James R."/>
            <person name="Phelps K."/>
            <person name="Iadanoto S."/>
            <person name="Bubb K."/>
            <person name="Simms E."/>
            <person name="Levy R."/>
            <person name="Clendenning J."/>
            <person name="Kaul R."/>
            <person name="Kent W.J."/>
            <person name="Furey T.S."/>
            <person name="Baertsch R.A."/>
            <person name="Brent M.R."/>
            <person name="Keibler E."/>
            <person name="Flicek P."/>
            <person name="Bork P."/>
            <person name="Suyama M."/>
            <person name="Bailey J.A."/>
            <person name="Portnoy M.E."/>
            <person name="Torrents D."/>
            <person name="Chinwalla A.T."/>
            <person name="Gish W.R."/>
            <person name="Eddy S.R."/>
            <person name="McPherson J.D."/>
            <person name="Olson M.V."/>
            <person name="Eichler E.E."/>
            <person name="Green E.D."/>
            <person name="Waterston R.H."/>
            <person name="Wilson R.K."/>
        </authorList>
    </citation>
    <scope>NUCLEOTIDE SEQUENCE [LARGE SCALE GENOMIC DNA] (IMGT ALLELE TRBV29-1*01)</scope>
</reference>
<reference key="3">
    <citation type="book" date="2001" name="The T Cell Receptor FactsBook.">
        <title>The T Cell Receptor FactsBook.</title>
        <editorList>
            <person name="Lefranc M.P."/>
            <person name="Lefranc G."/>
        </editorList>
        <authorList>
            <person name="Lefranc M.P."/>
            <person name="Lefranc G."/>
        </authorList>
    </citation>
    <scope>NOMENCLATURE</scope>
</reference>
<reference key="4">
    <citation type="journal article" date="2004" name="Nat. Rev. Immunol.">
        <title>The many important facets of T-cell repertoire diversity.</title>
        <authorList>
            <person name="Nikolich-Zugich J."/>
            <person name="Slifka M.K."/>
            <person name="Messaoudi I."/>
        </authorList>
    </citation>
    <scope>REVIEW ON T CELL REPERTOIRE DIVERSITY</scope>
</reference>
<reference key="5">
    <citation type="journal article" date="2010" name="Cold Spring Harb. Perspect. Biol.">
        <title>Structural biology of the T-cell receptor: insights into receptor assembly, ligand recognition, and initiation of signaling.</title>
        <authorList>
            <person name="Wucherpfennig K.W."/>
            <person name="Gagnon E."/>
            <person name="Call M.J."/>
            <person name="Huseby E.S."/>
            <person name="Call M.E."/>
        </authorList>
    </citation>
    <scope>REVIEW ON T CELL RECEPTOR-CD3 COMPLEX ASSEMBLY</scope>
    <scope>SUBCELLULAR LOCATION</scope>
</reference>
<reference key="6">
    <citation type="journal article" date="2013" name="Nat. Rev. Immunol.">
        <title>T cell receptor signalling networks: branched, diversified and bounded.</title>
        <authorList>
            <person name="Brownlie R.J."/>
            <person name="Zamoyska R."/>
        </authorList>
    </citation>
    <scope>REVIEW ON T CELL RECEPTOR SIGNALING</scope>
</reference>
<reference key="7">
    <citation type="journal article" date="2014" name="Front. Immunol.">
        <title>Immunoglobulin and T Cell Receptor Genes: IMGT((R)) and the Birth and Rise of Immunoinformatics.</title>
        <authorList>
            <person name="Lefranc M.P."/>
        </authorList>
    </citation>
    <scope>NOMENCLATURE</scope>
</reference>
<reference key="8">
    <citation type="journal article" date="2015" name="Annu. Rev. Immunol.">
        <title>T cell antigen receptor recognition of antigen-presenting molecules.</title>
        <authorList>
            <person name="Rossjohn J."/>
            <person name="Gras S."/>
            <person name="Miles J.J."/>
            <person name="Turner S.J."/>
            <person name="Godfrey D.I."/>
            <person name="McCluskey J."/>
        </authorList>
    </citation>
    <scope>REVIEW ON FUNCTION</scope>
</reference>
<name>TVB29_HUMAN</name>
<keyword id="KW-1064">Adaptive immunity</keyword>
<keyword id="KW-1003">Cell membrane</keyword>
<keyword id="KW-1015">Disulfide bond</keyword>
<keyword id="KW-0325">Glycoprotein</keyword>
<keyword id="KW-0391">Immunity</keyword>
<keyword id="KW-0393">Immunoglobulin domain</keyword>
<keyword id="KW-0472">Membrane</keyword>
<keyword id="KW-0675">Receptor</keyword>
<keyword id="KW-1185">Reference proteome</keyword>
<keyword id="KW-0732">Signal</keyword>
<keyword id="KW-1279">T cell receptor</keyword>
<sequence>MLSLLLLLLGLGSVFSAVISQKPSRDICQRGTSLTIQCQVDSQVTMMFWYRQQPGQSLTLIATANQGSEATYESGFVIDKFPISRPNLTFSTLTVSNMSPEDSSIYLCSVE</sequence>
<feature type="signal peptide" evidence="1">
    <location>
        <begin position="1"/>
        <end position="16"/>
    </location>
</feature>
<feature type="chain" id="PRO_5014564938" description="T cell receptor beta variable 29-1" evidence="1">
    <location>
        <begin position="17"/>
        <end position="111"/>
    </location>
</feature>
<feature type="domain" description="Ig-like" evidence="2">
    <location>
        <begin position="17"/>
        <end position="111" status="greater than"/>
    </location>
</feature>
<feature type="glycosylation site" description="N-linked (GlcNAc...) asparagine" evidence="3">
    <location>
        <position position="87"/>
    </location>
</feature>
<feature type="disulfide bond" evidence="2">
    <location>
        <begin position="38"/>
        <end position="108"/>
    </location>
</feature>
<feature type="non-terminal residue">
    <location>
        <position position="111"/>
    </location>
</feature>
<dbReference type="EMBL" id="L36092">
    <property type="protein sequence ID" value="AAC80212.1"/>
    <property type="molecule type" value="Genomic_DNA"/>
</dbReference>
<dbReference type="EMBL" id="AC244472">
    <property type="status" value="NOT_ANNOTATED_CDS"/>
    <property type="molecule type" value="Genomic_DNA"/>
</dbReference>
<dbReference type="SMR" id="A0A5B7"/>
<dbReference type="FunCoup" id="A0A5B7">
    <property type="interactions" value="347"/>
</dbReference>
<dbReference type="IMGT_GENE-DB" id="TRBV29-1"/>
<dbReference type="GlyCosmos" id="A0A5B7">
    <property type="glycosylation" value="1 site, No reported glycans"/>
</dbReference>
<dbReference type="GlyGen" id="A0A5B7">
    <property type="glycosylation" value="1 site"/>
</dbReference>
<dbReference type="BioMuta" id="TRBV29-1"/>
<dbReference type="Ensembl" id="ENST00000422143.2">
    <property type="protein sequence ID" value="ENSP00000395459.2"/>
    <property type="gene ID" value="ENSG00000232869.2"/>
</dbReference>
<dbReference type="Ensembl" id="ENST00000634198.1">
    <property type="protein sequence ID" value="ENSP00000488861.1"/>
    <property type="gene ID" value="ENSG00000282628.1"/>
</dbReference>
<dbReference type="UCSC" id="uc033amx.2">
    <property type="organism name" value="human"/>
</dbReference>
<dbReference type="AGR" id="HGNC:12210"/>
<dbReference type="GeneCards" id="TRBV29-1"/>
<dbReference type="HGNC" id="HGNC:12210">
    <property type="gene designation" value="TRBV29-1"/>
</dbReference>
<dbReference type="HPA" id="ENSG00000232869">
    <property type="expression patterns" value="Tissue enriched (lymphoid)"/>
</dbReference>
<dbReference type="neXtProt" id="NX_A0A5B7"/>
<dbReference type="OpenTargets" id="ENSG00000232869"/>
<dbReference type="VEuPathDB" id="HostDB:ENSG00000232869"/>
<dbReference type="GeneTree" id="ENSGT00530000064313"/>
<dbReference type="HOGENOM" id="CLU_077975_4_1_1"/>
<dbReference type="InParanoid" id="A0A5B7"/>
<dbReference type="OMA" id="SRDICQR"/>
<dbReference type="OrthoDB" id="9644002at2759"/>
<dbReference type="PAN-GO" id="A0A5B7">
    <property type="GO annotations" value="2 GO annotations based on evolutionary models"/>
</dbReference>
<dbReference type="PhylomeDB" id="A0A5B7"/>
<dbReference type="SignaLink" id="A0A5B7"/>
<dbReference type="Pharos" id="A0A5B7">
    <property type="development level" value="Tdark"/>
</dbReference>
<dbReference type="PRO" id="PR:A0A5B7"/>
<dbReference type="Proteomes" id="UP000005640">
    <property type="component" value="Chromosome 7"/>
</dbReference>
<dbReference type="RNAct" id="A0A5B7">
    <property type="molecule type" value="protein"/>
</dbReference>
<dbReference type="Bgee" id="ENSG00000232869">
    <property type="expression patterns" value="Expressed in male germ line stem cell (sensu Vertebrata) in testis and 89 other cell types or tissues"/>
</dbReference>
<dbReference type="GO" id="GO:0005886">
    <property type="term" value="C:plasma membrane"/>
    <property type="evidence" value="ECO:0000318"/>
    <property type="project" value="GO_Central"/>
</dbReference>
<dbReference type="GO" id="GO:0042101">
    <property type="term" value="C:T cell receptor complex"/>
    <property type="evidence" value="ECO:0007669"/>
    <property type="project" value="UniProtKB-KW"/>
</dbReference>
<dbReference type="GO" id="GO:0002250">
    <property type="term" value="P:adaptive immune response"/>
    <property type="evidence" value="ECO:0007669"/>
    <property type="project" value="UniProtKB-KW"/>
</dbReference>
<dbReference type="GO" id="GO:0007166">
    <property type="term" value="P:cell surface receptor signaling pathway"/>
    <property type="evidence" value="ECO:0000318"/>
    <property type="project" value="GO_Central"/>
</dbReference>
<dbReference type="Gene3D" id="2.60.40.10">
    <property type="entry name" value="Immunoglobulins"/>
    <property type="match status" value="1"/>
</dbReference>
<dbReference type="InterPro" id="IPR007110">
    <property type="entry name" value="Ig-like_dom"/>
</dbReference>
<dbReference type="InterPro" id="IPR036179">
    <property type="entry name" value="Ig-like_dom_sf"/>
</dbReference>
<dbReference type="InterPro" id="IPR013783">
    <property type="entry name" value="Ig-like_fold"/>
</dbReference>
<dbReference type="InterPro" id="IPR013106">
    <property type="entry name" value="Ig_V-set"/>
</dbReference>
<dbReference type="InterPro" id="IPR050413">
    <property type="entry name" value="TCR_beta_variable"/>
</dbReference>
<dbReference type="PANTHER" id="PTHR23268:SF117">
    <property type="entry name" value="T CELL RECEPTOR BETA VARIABLE 29-1"/>
    <property type="match status" value="1"/>
</dbReference>
<dbReference type="PANTHER" id="PTHR23268">
    <property type="entry name" value="T-CELL RECEPTOR BETA CHAIN"/>
    <property type="match status" value="1"/>
</dbReference>
<dbReference type="Pfam" id="PF07686">
    <property type="entry name" value="V-set"/>
    <property type="match status" value="1"/>
</dbReference>
<dbReference type="SMART" id="SM00406">
    <property type="entry name" value="IGv"/>
    <property type="match status" value="1"/>
</dbReference>
<dbReference type="SUPFAM" id="SSF48726">
    <property type="entry name" value="Immunoglobulin"/>
    <property type="match status" value="1"/>
</dbReference>
<dbReference type="PROSITE" id="PS50835">
    <property type="entry name" value="IG_LIKE"/>
    <property type="match status" value="1"/>
</dbReference>
<organism>
    <name type="scientific">Homo sapiens</name>
    <name type="common">Human</name>
    <dbReference type="NCBI Taxonomy" id="9606"/>
    <lineage>
        <taxon>Eukaryota</taxon>
        <taxon>Metazoa</taxon>
        <taxon>Chordata</taxon>
        <taxon>Craniata</taxon>
        <taxon>Vertebrata</taxon>
        <taxon>Euteleostomi</taxon>
        <taxon>Mammalia</taxon>
        <taxon>Eutheria</taxon>
        <taxon>Euarchontoglires</taxon>
        <taxon>Primates</taxon>
        <taxon>Haplorrhini</taxon>
        <taxon>Catarrhini</taxon>
        <taxon>Hominidae</taxon>
        <taxon>Homo</taxon>
    </lineage>
</organism>
<proteinExistence type="inferred from homology"/>
<comment type="function">
    <text evidence="4 6 7 8">V region of the variable domain of T cell receptor (TR) beta chain that participates in the antigen recognition (PubMed:24600447). Alpha-beta T cell receptors are antigen specific receptors which are essential to the immune response and are present on the cell surface of T lymphocytes. Recognize peptide-major histocompatibility (MH) (pMH) complexes that are displayed by antigen presenting cells (APC), a prerequisite for efficient T cell adaptive immunity against pathogens (PubMed:25493333). Binding of alpha-beta TR to pMH complex initiates TR-CD3 clustering on the cell surface and intracellular activation of LCK that phosphorylates the ITAM motifs of CD3G, CD3D, CD3E and CD247 enabling the recruitment of ZAP70. In turn ZAP70 phosphorylates LAT, which recruits numerous signaling molecules to form the LAT signalosome. The LAT signalosome propagates signal branching to three major signaling pathways, the calcium, the mitogen-activated protein kinase (MAPK) kinase and the nuclear factor NF-kappa-B (NF-kB) pathways, leading to the mobilization of transcription factors that are critical for gene expression and essential for T cell growth and differentiation (PubMed:23524462). The T cell repertoire is generated in the thymus, by V-(D)-J rearrangement. This repertoire is then shaped by intrathymic selection events to generate a peripheral T cell pool of self-MH restricted, non-autoaggressive T cells. Post-thymic interaction of alpha-beta TR with the pMH complexes shapes TR structural and functional avidity (PubMed:15040585).</text>
</comment>
<comment type="subunit">
    <text evidence="5">Alpha-beta TR is a heterodimer composed of an alpha and beta chain; disulfide-linked. The alpha-beta TR is associated with the transmembrane signaling CD3 coreceptor proteins to form the TR-CD3 (TcR or TCR). The assembly of alpha-beta TR heterodimers with CD3 occurs in the endoplasmic reticulum where a single alpha-beta TR heterodimer associates with one CD3D-CD3E heterodimer, one CD3G-CD3E heterodimer and one CD247 homodimer forming a stable octameric structure. CD3D-CD3E and CD3G-CD3E heterodimers preferentially associate with TR alpha and TR beta chains, respectively. The association of the CD247 homodimer is the last step of TcR assembly in the endoplasmic reticulum and is required for transport to the cell surface.</text>
</comment>
<comment type="subcellular location">
    <subcellularLocation>
        <location evidence="5">Cell membrane</location>
    </subcellularLocation>
</comment>
<comment type="polymorphism">
    <text evidence="11">There are several alleles. The sequence shown is that of IMGT allele TRBV29-1*01.</text>
</comment>
<protein>
    <recommendedName>
        <fullName evidence="10">T cell receptor beta variable 29-1</fullName>
    </recommendedName>
</protein>
<gene>
    <name evidence="10" type="primary">TRBV29-1</name>
    <name evidence="9" type="synonym">TCRBV4S1A1T</name>
</gene>
<accession>A0A5B7</accession>